<gene>
    <name evidence="2" type="primary">trmB</name>
    <name type="ordered locus">Bcen2424_0918</name>
</gene>
<reference key="1">
    <citation type="submission" date="2006-08" db="EMBL/GenBank/DDBJ databases">
        <title>Complete sequence of chromosome 1 of Burkholderia cenocepacia HI2424.</title>
        <authorList>
            <person name="Copeland A."/>
            <person name="Lucas S."/>
            <person name="Lapidus A."/>
            <person name="Barry K."/>
            <person name="Detter J.C."/>
            <person name="Glavina del Rio T."/>
            <person name="Hammon N."/>
            <person name="Israni S."/>
            <person name="Pitluck S."/>
            <person name="Chain P."/>
            <person name="Malfatti S."/>
            <person name="Shin M."/>
            <person name="Vergez L."/>
            <person name="Schmutz J."/>
            <person name="Larimer F."/>
            <person name="Land M."/>
            <person name="Hauser L."/>
            <person name="Kyrpides N."/>
            <person name="Kim E."/>
            <person name="LiPuma J.J."/>
            <person name="Gonzalez C.F."/>
            <person name="Konstantinidis K."/>
            <person name="Tiedje J.M."/>
            <person name="Richardson P."/>
        </authorList>
    </citation>
    <scope>NUCLEOTIDE SEQUENCE [LARGE SCALE GENOMIC DNA]</scope>
    <source>
        <strain>HI2424</strain>
    </source>
</reference>
<evidence type="ECO:0000250" key="1"/>
<evidence type="ECO:0000255" key="2">
    <source>
        <dbReference type="HAMAP-Rule" id="MF_01057"/>
    </source>
</evidence>
<evidence type="ECO:0000256" key="3">
    <source>
        <dbReference type="SAM" id="MobiDB-lite"/>
    </source>
</evidence>
<keyword id="KW-0489">Methyltransferase</keyword>
<keyword id="KW-0949">S-adenosyl-L-methionine</keyword>
<keyword id="KW-0808">Transferase</keyword>
<keyword id="KW-0819">tRNA processing</keyword>
<name>TRMB_BURCH</name>
<comment type="function">
    <text evidence="2">Catalyzes the formation of N(7)-methylguanine at position 46 (m7G46) in tRNA.</text>
</comment>
<comment type="catalytic activity">
    <reaction evidence="2">
        <text>guanosine(46) in tRNA + S-adenosyl-L-methionine = N(7)-methylguanosine(46) in tRNA + S-adenosyl-L-homocysteine</text>
        <dbReference type="Rhea" id="RHEA:42708"/>
        <dbReference type="Rhea" id="RHEA-COMP:10188"/>
        <dbReference type="Rhea" id="RHEA-COMP:10189"/>
        <dbReference type="ChEBI" id="CHEBI:57856"/>
        <dbReference type="ChEBI" id="CHEBI:59789"/>
        <dbReference type="ChEBI" id="CHEBI:74269"/>
        <dbReference type="ChEBI" id="CHEBI:74480"/>
        <dbReference type="EC" id="2.1.1.33"/>
    </reaction>
</comment>
<comment type="pathway">
    <text evidence="2">tRNA modification; N(7)-methylguanine-tRNA biosynthesis.</text>
</comment>
<comment type="similarity">
    <text evidence="2">Belongs to the class I-like SAM-binding methyltransferase superfamily. TrmB family.</text>
</comment>
<feature type="chain" id="PRO_0000288128" description="tRNA (guanine-N(7)-)-methyltransferase">
    <location>
        <begin position="1"/>
        <end position="255"/>
    </location>
</feature>
<feature type="region of interest" description="Disordered" evidence="3">
    <location>
        <begin position="1"/>
        <end position="31"/>
    </location>
</feature>
<feature type="compositionally biased region" description="Acidic residues" evidence="3">
    <location>
        <begin position="18"/>
        <end position="27"/>
    </location>
</feature>
<feature type="active site" evidence="1">
    <location>
        <position position="161"/>
    </location>
</feature>
<feature type="binding site" evidence="2">
    <location>
        <position position="86"/>
    </location>
    <ligand>
        <name>S-adenosyl-L-methionine</name>
        <dbReference type="ChEBI" id="CHEBI:59789"/>
    </ligand>
</feature>
<feature type="binding site" evidence="2">
    <location>
        <position position="111"/>
    </location>
    <ligand>
        <name>S-adenosyl-L-methionine</name>
        <dbReference type="ChEBI" id="CHEBI:59789"/>
    </ligand>
</feature>
<feature type="binding site" evidence="2">
    <location>
        <position position="138"/>
    </location>
    <ligand>
        <name>S-adenosyl-L-methionine</name>
        <dbReference type="ChEBI" id="CHEBI:59789"/>
    </ligand>
</feature>
<feature type="binding site" evidence="2">
    <location>
        <position position="161"/>
    </location>
    <ligand>
        <name>S-adenosyl-L-methionine</name>
        <dbReference type="ChEBI" id="CHEBI:59789"/>
    </ligand>
</feature>
<feature type="binding site" evidence="2">
    <location>
        <position position="165"/>
    </location>
    <ligand>
        <name>substrate</name>
    </ligand>
</feature>
<feature type="binding site" evidence="2">
    <location>
        <position position="197"/>
    </location>
    <ligand>
        <name>substrate</name>
    </ligand>
</feature>
<feature type="binding site" evidence="2">
    <location>
        <begin position="232"/>
        <end position="235"/>
    </location>
    <ligand>
        <name>substrate</name>
    </ligand>
</feature>
<sequence length="255" mass="28528">MMHDDPNEAGLPPHNDAIPDETAEGADEVNPLHHRRIRSFVTRAGRVSTGQRRALDEFGPRFVVPYAPEMPDWDAIFGRSAPRILEIGFGMGASTAEIAAHRPSDDFLGVEVHEPGVGALLKLIGEQGLSNIRIIQHDAVEVLEHMIAPASLDGVHIFFPDPWHKARHHKRRLIQPPLVAHLASRLKPGAYLHCATDWQNYAEQMLEVLGAEPTLENTAADYAPRPDYRPVTKFERRGLRLGHGVWDLVFRKRAD</sequence>
<protein>
    <recommendedName>
        <fullName evidence="2">tRNA (guanine-N(7)-)-methyltransferase</fullName>
        <ecNumber evidence="2">2.1.1.33</ecNumber>
    </recommendedName>
    <alternativeName>
        <fullName evidence="2">tRNA (guanine(46)-N(7))-methyltransferase</fullName>
    </alternativeName>
    <alternativeName>
        <fullName evidence="2">tRNA(m7G46)-methyltransferase</fullName>
    </alternativeName>
</protein>
<organism>
    <name type="scientific">Burkholderia cenocepacia (strain HI2424)</name>
    <dbReference type="NCBI Taxonomy" id="331272"/>
    <lineage>
        <taxon>Bacteria</taxon>
        <taxon>Pseudomonadati</taxon>
        <taxon>Pseudomonadota</taxon>
        <taxon>Betaproteobacteria</taxon>
        <taxon>Burkholderiales</taxon>
        <taxon>Burkholderiaceae</taxon>
        <taxon>Burkholderia</taxon>
        <taxon>Burkholderia cepacia complex</taxon>
    </lineage>
</organism>
<dbReference type="EC" id="2.1.1.33" evidence="2"/>
<dbReference type="EMBL" id="CP000458">
    <property type="protein sequence ID" value="ABK07671.1"/>
    <property type="molecule type" value="Genomic_DNA"/>
</dbReference>
<dbReference type="RefSeq" id="WP_011544784.1">
    <property type="nucleotide sequence ID" value="NC_008542.1"/>
</dbReference>
<dbReference type="SMR" id="A0K594"/>
<dbReference type="KEGG" id="bch:Bcen2424_0918"/>
<dbReference type="HOGENOM" id="CLU_050910_0_1_4"/>
<dbReference type="UniPathway" id="UPA00989"/>
<dbReference type="GO" id="GO:0043527">
    <property type="term" value="C:tRNA methyltransferase complex"/>
    <property type="evidence" value="ECO:0007669"/>
    <property type="project" value="TreeGrafter"/>
</dbReference>
<dbReference type="GO" id="GO:0008176">
    <property type="term" value="F:tRNA (guanine(46)-N7)-methyltransferase activity"/>
    <property type="evidence" value="ECO:0007669"/>
    <property type="project" value="UniProtKB-UniRule"/>
</dbReference>
<dbReference type="CDD" id="cd02440">
    <property type="entry name" value="AdoMet_MTases"/>
    <property type="match status" value="1"/>
</dbReference>
<dbReference type="FunFam" id="3.40.50.150:FF:000035">
    <property type="entry name" value="tRNA (guanine-N(7)-)-methyltransferase"/>
    <property type="match status" value="1"/>
</dbReference>
<dbReference type="Gene3D" id="3.40.50.150">
    <property type="entry name" value="Vaccinia Virus protein VP39"/>
    <property type="match status" value="1"/>
</dbReference>
<dbReference type="HAMAP" id="MF_01057">
    <property type="entry name" value="tRNA_methyltr_TrmB"/>
    <property type="match status" value="1"/>
</dbReference>
<dbReference type="InterPro" id="IPR029063">
    <property type="entry name" value="SAM-dependent_MTases_sf"/>
</dbReference>
<dbReference type="InterPro" id="IPR003358">
    <property type="entry name" value="tRNA_(Gua-N-7)_MeTrfase_Trmb"/>
</dbReference>
<dbReference type="InterPro" id="IPR055361">
    <property type="entry name" value="tRNA_methyltr_TrmB_bact"/>
</dbReference>
<dbReference type="NCBIfam" id="TIGR00091">
    <property type="entry name" value="tRNA (guanosine(46)-N7)-methyltransferase TrmB"/>
    <property type="match status" value="1"/>
</dbReference>
<dbReference type="PANTHER" id="PTHR23417">
    <property type="entry name" value="3-DEOXY-D-MANNO-OCTULOSONIC-ACID TRANSFERASE/TRNA GUANINE-N 7 - -METHYLTRANSFERASE"/>
    <property type="match status" value="1"/>
</dbReference>
<dbReference type="PANTHER" id="PTHR23417:SF14">
    <property type="entry name" value="PENTACOTRIPEPTIDE-REPEAT REGION OF PRORP DOMAIN-CONTAINING PROTEIN"/>
    <property type="match status" value="1"/>
</dbReference>
<dbReference type="Pfam" id="PF02390">
    <property type="entry name" value="Methyltransf_4"/>
    <property type="match status" value="1"/>
</dbReference>
<dbReference type="SUPFAM" id="SSF53335">
    <property type="entry name" value="S-adenosyl-L-methionine-dependent methyltransferases"/>
    <property type="match status" value="1"/>
</dbReference>
<dbReference type="PROSITE" id="PS51625">
    <property type="entry name" value="SAM_MT_TRMB"/>
    <property type="match status" value="1"/>
</dbReference>
<accession>A0K594</accession>
<proteinExistence type="inferred from homology"/>